<proteinExistence type="evidence at transcript level"/>
<feature type="initiator methionine" description="Removed" evidence="2">
    <location>
        <position position="1"/>
    </location>
</feature>
<feature type="chain" id="PRO_0000278233" description="E3 ubiquitin-protein ligase Praja-2">
    <location>
        <begin position="2"/>
        <end position="707"/>
    </location>
</feature>
<feature type="zinc finger region" description="RING-type; atypical" evidence="3">
    <location>
        <begin position="633"/>
        <end position="674"/>
    </location>
</feature>
<feature type="region of interest" description="Disordered" evidence="4">
    <location>
        <begin position="1"/>
        <end position="23"/>
    </location>
</feature>
<feature type="region of interest" description="Disordered" evidence="4">
    <location>
        <begin position="75"/>
        <end position="120"/>
    </location>
</feature>
<feature type="region of interest" description="Disordered" evidence="4">
    <location>
        <begin position="242"/>
        <end position="290"/>
    </location>
</feature>
<feature type="region of interest" description="Disordered" evidence="4">
    <location>
        <begin position="380"/>
        <end position="403"/>
    </location>
</feature>
<feature type="region of interest" description="Disordered" evidence="4">
    <location>
        <begin position="424"/>
        <end position="493"/>
    </location>
</feature>
<feature type="region of interest" description="Interaction with PRKAR1A, PRKAR2A and PRKAR2B" evidence="1">
    <location>
        <begin position="530"/>
        <end position="707"/>
    </location>
</feature>
<feature type="region of interest" description="Mediates interaction with TBC1D31" evidence="2">
    <location>
        <begin position="549"/>
        <end position="569"/>
    </location>
</feature>
<feature type="region of interest" description="Disordered" evidence="4">
    <location>
        <begin position="686"/>
        <end position="707"/>
    </location>
</feature>
<feature type="compositionally biased region" description="Basic and acidic residues" evidence="4">
    <location>
        <begin position="1"/>
        <end position="10"/>
    </location>
</feature>
<feature type="compositionally biased region" description="Polar residues" evidence="4">
    <location>
        <begin position="109"/>
        <end position="119"/>
    </location>
</feature>
<feature type="compositionally biased region" description="Basic and acidic residues" evidence="4">
    <location>
        <begin position="246"/>
        <end position="276"/>
    </location>
</feature>
<feature type="compositionally biased region" description="Basic and acidic residues" evidence="4">
    <location>
        <begin position="381"/>
        <end position="391"/>
    </location>
</feature>
<feature type="compositionally biased region" description="Acidic residues" evidence="4">
    <location>
        <begin position="465"/>
        <end position="481"/>
    </location>
</feature>
<feature type="compositionally biased region" description="Polar residues" evidence="4">
    <location>
        <begin position="482"/>
        <end position="491"/>
    </location>
</feature>
<feature type="modified residue" description="N-acetylserine" evidence="2">
    <location>
        <position position="2"/>
    </location>
</feature>
<feature type="modified residue" description="Phosphoserine" evidence="2">
    <location>
        <position position="306"/>
    </location>
</feature>
<feature type="modified residue" description="Phosphoserine" evidence="2">
    <location>
        <position position="320"/>
    </location>
</feature>
<feature type="modified residue" description="Phosphoserine; by PKA" evidence="2">
    <location>
        <position position="339"/>
    </location>
</feature>
<feature type="modified residue" description="Phosphoserine" evidence="2">
    <location>
        <position position="430"/>
    </location>
</feature>
<name>PJA2_RAT</name>
<evidence type="ECO:0000250" key="1"/>
<evidence type="ECO:0000250" key="2">
    <source>
        <dbReference type="UniProtKB" id="O43164"/>
    </source>
</evidence>
<evidence type="ECO:0000255" key="3">
    <source>
        <dbReference type="PROSITE-ProRule" id="PRU00175"/>
    </source>
</evidence>
<evidence type="ECO:0000256" key="4">
    <source>
        <dbReference type="SAM" id="MobiDB-lite"/>
    </source>
</evidence>
<evidence type="ECO:0000269" key="5">
    <source>
    </source>
</evidence>
<evidence type="ECO:0000269" key="6">
    <source>
    </source>
</evidence>
<evidence type="ECO:0000305" key="7"/>
<protein>
    <recommendedName>
        <fullName>E3 ubiquitin-protein ligase Praja-2</fullName>
        <shortName>Praja2</shortName>
        <ecNumber evidence="2">2.3.2.27</ecNumber>
    </recommendedName>
    <alternativeName>
        <fullName evidence="7">RING-type E3 ubiquitin transferase Praja-2</fullName>
    </alternativeName>
</protein>
<keyword id="KW-0007">Acetylation</keyword>
<keyword id="KW-1003">Cell membrane</keyword>
<keyword id="KW-0963">Cytoplasm</keyword>
<keyword id="KW-0206">Cytoskeleton</keyword>
<keyword id="KW-0256">Endoplasmic reticulum</keyword>
<keyword id="KW-0333">Golgi apparatus</keyword>
<keyword id="KW-0472">Membrane</keyword>
<keyword id="KW-0479">Metal-binding</keyword>
<keyword id="KW-0597">Phosphoprotein</keyword>
<keyword id="KW-1185">Reference proteome</keyword>
<keyword id="KW-0770">Synapse</keyword>
<keyword id="KW-0808">Transferase</keyword>
<keyword id="KW-0833">Ubl conjugation pathway</keyword>
<keyword id="KW-0862">Zinc</keyword>
<keyword id="KW-0863">Zinc-finger</keyword>
<reference key="1">
    <citation type="journal article" date="1995" name="J. Neurosci.">
        <title>A novel RING-H2 motif protein downregulated by axotomy: its characteristic localization at the postsynaptic density of axosomatic synapse.</title>
        <authorList>
            <person name="Nakayama M."/>
            <person name="Miyake T."/>
            <person name="Gahara Y."/>
            <person name="Ohara O."/>
            <person name="Kitamura T."/>
        </authorList>
    </citation>
    <scope>NUCLEOTIDE SEQUENCE [MRNA]</scope>
    <scope>SUBCELLULAR LOCATION</scope>
    <scope>TISSUE SPECIFICITY</scope>
    <source>
        <strain>Sprague-Dawley</strain>
        <tissue>Brain</tissue>
    </source>
</reference>
<reference key="2">
    <citation type="journal article" date="2004" name="Genome Res.">
        <title>The status, quality, and expansion of the NIH full-length cDNA project: the Mammalian Gene Collection (MGC).</title>
        <authorList>
            <consortium name="The MGC Project Team"/>
        </authorList>
    </citation>
    <scope>NUCLEOTIDE SEQUENCE [LARGE SCALE MRNA]</scope>
    <source>
        <tissue>Heart</tissue>
    </source>
</reference>
<reference key="3">
    <citation type="journal article" date="2011" name="Nat. Cell Biol.">
        <title>Control of PKA stability and signalling by the RING ligase praja2.</title>
        <authorList>
            <person name="Lignitto L."/>
            <person name="Carlucci A."/>
            <person name="Sepe M."/>
            <person name="Stefan E."/>
            <person name="Cuomo O."/>
            <person name="Nistico R."/>
            <person name="Scorziello A."/>
            <person name="Savoia C."/>
            <person name="Garbi C."/>
            <person name="Annunziato L."/>
            <person name="Feliciello A."/>
        </authorList>
    </citation>
    <scope>FUNCTION</scope>
    <scope>TISSUE SPECIFICITY</scope>
</reference>
<comment type="function">
    <text evidence="2 5">Has E2-dependent E3 ubiquitin-protein ligase activity. Responsible for ubiquitination of cAMP-dependent protein kinase type I and type II-alpha/beta regulatory subunits and for targeting them for proteasomal degradation. Essential for PKA-mediated long-term memory processes (PubMed:21423175). Through the ubiquitination of MFHAS1, positively regulates the TLR2 signaling pathway that leads to the activation of the downstream p38 and JNK MAP kinases and promotes the polarization of macrophages toward the pro-inflammatory M1 phenotype. Plays a role in ciliogenesis by ubiquitinating OFD1 (By similarity).</text>
</comment>
<comment type="catalytic activity">
    <reaction evidence="2">
        <text>S-ubiquitinyl-[E2 ubiquitin-conjugating enzyme]-L-cysteine + [acceptor protein]-L-lysine = [E2 ubiquitin-conjugating enzyme]-L-cysteine + N(6)-ubiquitinyl-[acceptor protein]-L-lysine.</text>
        <dbReference type="EC" id="2.3.2.27"/>
    </reaction>
</comment>
<comment type="pathway">
    <text evidence="2">Protein modification; protein ubiquitination.</text>
</comment>
<comment type="subunit">
    <text evidence="2">Binds ubiquitin-conjugating enzymes (E2s). In vitro, interacts with the ubiquitin-conjugating enzyme, UBE2D2. The phosphorylated form interacts with PRKAR1A, PRKAR2A and PRKAR2B. Binds the catalytic subunits of cAMP-dependent protein kinase. Interacts with MFHAS1. Interacts with TBC1D31; the interaction is direct and recruits PJA2 to centrosomes.</text>
</comment>
<comment type="subcellular location">
    <subcellularLocation>
        <location evidence="6">Cytoplasm</location>
    </subcellularLocation>
    <subcellularLocation>
        <location evidence="2">Cell membrane</location>
    </subcellularLocation>
    <subcellularLocation>
        <location evidence="6">Endoplasmic reticulum membrane</location>
        <topology evidence="6">Peripheral membrane protein</topology>
    </subcellularLocation>
    <subcellularLocation>
        <location evidence="6">Golgi apparatus membrane</location>
        <topology evidence="6">Peripheral membrane protein</topology>
    </subcellularLocation>
    <subcellularLocation>
        <location evidence="6">Synapse</location>
    </subcellularLocation>
    <subcellularLocation>
        <location evidence="6">Postsynaptic density</location>
    </subcellularLocation>
    <subcellularLocation>
        <location evidence="2">Cytoplasm</location>
        <location evidence="2">Cytoskeleton</location>
        <location evidence="2">Microtubule organizing center</location>
        <location evidence="2">Centrosome</location>
    </subcellularLocation>
    <text evidence="2 6">Localizes at the cytoplasmic side of endoplasmic reticulum and Golgi apparatus (By similarity). Expressed in the postsynaptic density region of synapses (PubMed:7623148). Colocalizes with PRKAR2A and PRKAR2B in the cytoplasm and the cell membrane (By similarity).</text>
</comment>
<comment type="tissue specificity">
    <text evidence="5 6">Highly expressed in the brain, in nerve cells but not in glial cells. Abundantly expressed in pyramidal neurons and in the CA3 region of apical dendrites. Colocalizes with PRKAR2B in dentate granule cells and at postsynaptic sites of primary hippocampal neurons.</text>
</comment>
<gene>
    <name type="primary">Pja2</name>
    <name type="synonym">Neurodap1</name>
</gene>
<organism>
    <name type="scientific">Rattus norvegicus</name>
    <name type="common">Rat</name>
    <dbReference type="NCBI Taxonomy" id="10116"/>
    <lineage>
        <taxon>Eukaryota</taxon>
        <taxon>Metazoa</taxon>
        <taxon>Chordata</taxon>
        <taxon>Craniata</taxon>
        <taxon>Vertebrata</taxon>
        <taxon>Euteleostomi</taxon>
        <taxon>Mammalia</taxon>
        <taxon>Eutheria</taxon>
        <taxon>Euarchontoglires</taxon>
        <taxon>Glires</taxon>
        <taxon>Rodentia</taxon>
        <taxon>Myomorpha</taxon>
        <taxon>Muroidea</taxon>
        <taxon>Muridae</taxon>
        <taxon>Murinae</taxon>
        <taxon>Rattus</taxon>
    </lineage>
</organism>
<accession>Q63364</accession>
<sequence>MSQYTEKEPSVMDQDSSKAAWPRAAGGYQTITGRRYGRRHAYVSFKPCMTRHERSLGRAGDDYEVLELDDVAKENTAGSSSLDQVHPSLPSETTVEKSETEIPTCGPALNQSTESNPSVATVCHSEEVRETLDSSTNLQNHAERECTPAVCNASSVQNGIVLVHTDSYDPDSKHDENDSLQLCAQAVEGGRRQKVLGNAVFELENGEVERYADLCPSVPSLSGEIREESEELGSALLEKNSAGDAEAVHQDGQEFQRSSEDGIVRKRRQDDTDQGRQTENSTEDADCVPGHVEQNTSERANHHGSSPEQVVRPKVRKVISSSQVDQESGFNRHEAKQRSVQRWREALEVEECSSDDPIIKCDDYDGDHDCMFLTPSYSRVTPREAERHRATAENGATASGRQEARENAFWNACGEYYQLFDKDEDSSECSDGEWSASLPHRFSGTEKDQSSSDESWETLPGKDENEPELQSDSSGPEEENQELSLQEGEQTSLEEGEIPWLQYNEVNESSSDEGNEPANEFAQPEAFMLDGNNNLEDDSSVSEDLDVDWSLFDGFADGLGVAEAISYVDPQFLTYMALEERLAQAMETALAHLESLAVDVEVANPPASKESIDGLPETLVLEDHTAIGQEQCCPICCSEYIKDDIATELPCHHFFHKPCVSIWLQKSGTCPVCRRHFPPAVIDASAAASSEPDLDASPANDNAEEAP</sequence>
<dbReference type="EC" id="2.3.2.27" evidence="2"/>
<dbReference type="EMBL" id="D32249">
    <property type="protein sequence ID" value="BAA06979.1"/>
    <property type="molecule type" value="mRNA"/>
</dbReference>
<dbReference type="EMBL" id="BC074015">
    <property type="protein sequence ID" value="AAH74015.1"/>
    <property type="molecule type" value="mRNA"/>
</dbReference>
<dbReference type="RefSeq" id="NP_001264207.1">
    <property type="nucleotide sequence ID" value="NM_001277278.1"/>
</dbReference>
<dbReference type="RefSeq" id="NP_620251.1">
    <property type="nucleotide sequence ID" value="NM_138896.2"/>
</dbReference>
<dbReference type="RefSeq" id="XP_017451755.1">
    <property type="nucleotide sequence ID" value="XM_017596266.2"/>
</dbReference>
<dbReference type="SMR" id="Q63364"/>
<dbReference type="FunCoup" id="Q63364">
    <property type="interactions" value="2839"/>
</dbReference>
<dbReference type="STRING" id="10116.ENSRNOP00000072362"/>
<dbReference type="GlyGen" id="Q63364">
    <property type="glycosylation" value="1 site"/>
</dbReference>
<dbReference type="iPTMnet" id="Q63364"/>
<dbReference type="PhosphoSitePlus" id="Q63364"/>
<dbReference type="PaxDb" id="10116-ENSRNOP00000021258"/>
<dbReference type="Ensembl" id="ENSRNOT00000080962.2">
    <property type="protein sequence ID" value="ENSRNOP00000072362.1"/>
    <property type="gene ID" value="ENSRNOG00000015528.8"/>
</dbReference>
<dbReference type="GeneID" id="192256"/>
<dbReference type="KEGG" id="rno:192256"/>
<dbReference type="AGR" id="RGD:620273"/>
<dbReference type="CTD" id="9867"/>
<dbReference type="RGD" id="620273">
    <property type="gene designation" value="Pja2"/>
</dbReference>
<dbReference type="eggNOG" id="KOG0800">
    <property type="taxonomic scope" value="Eukaryota"/>
</dbReference>
<dbReference type="GeneTree" id="ENSGT00940000154585"/>
<dbReference type="InParanoid" id="Q63364"/>
<dbReference type="OMA" id="NHSEGEC"/>
<dbReference type="OrthoDB" id="21204at2759"/>
<dbReference type="PhylomeDB" id="Q63364"/>
<dbReference type="TreeFam" id="TF330711"/>
<dbReference type="Reactome" id="R-RNO-983168">
    <property type="pathway name" value="Antigen processing: Ubiquitination &amp; Proteasome degradation"/>
</dbReference>
<dbReference type="UniPathway" id="UPA00143"/>
<dbReference type="PRO" id="PR:Q63364"/>
<dbReference type="Proteomes" id="UP000002494">
    <property type="component" value="Chromosome 9"/>
</dbReference>
<dbReference type="Bgee" id="ENSRNOG00000015528">
    <property type="expression patterns" value="Expressed in frontal cortex and 19 other cell types or tissues"/>
</dbReference>
<dbReference type="ExpressionAtlas" id="Q63364">
    <property type="expression patterns" value="baseline and differential"/>
</dbReference>
<dbReference type="GO" id="GO:0034451">
    <property type="term" value="C:centriolar satellite"/>
    <property type="evidence" value="ECO:0000266"/>
    <property type="project" value="RGD"/>
</dbReference>
<dbReference type="GO" id="GO:0005813">
    <property type="term" value="C:centrosome"/>
    <property type="evidence" value="ECO:0000266"/>
    <property type="project" value="RGD"/>
</dbReference>
<dbReference type="GO" id="GO:0005737">
    <property type="term" value="C:cytoplasm"/>
    <property type="evidence" value="ECO:0000250"/>
    <property type="project" value="UniProtKB"/>
</dbReference>
<dbReference type="GO" id="GO:0005789">
    <property type="term" value="C:endoplasmic reticulum membrane"/>
    <property type="evidence" value="ECO:0007669"/>
    <property type="project" value="UniProtKB-SubCell"/>
</dbReference>
<dbReference type="GO" id="GO:0098978">
    <property type="term" value="C:glutamatergic synapse"/>
    <property type="evidence" value="ECO:0000314"/>
    <property type="project" value="SynGO"/>
</dbReference>
<dbReference type="GO" id="GO:0000139">
    <property type="term" value="C:Golgi membrane"/>
    <property type="evidence" value="ECO:0007669"/>
    <property type="project" value="UniProtKB-SubCell"/>
</dbReference>
<dbReference type="GO" id="GO:0005886">
    <property type="term" value="C:plasma membrane"/>
    <property type="evidence" value="ECO:0000266"/>
    <property type="project" value="RGD"/>
</dbReference>
<dbReference type="GO" id="GO:0014069">
    <property type="term" value="C:postsynaptic density"/>
    <property type="evidence" value="ECO:0000314"/>
    <property type="project" value="SynGO"/>
</dbReference>
<dbReference type="GO" id="GO:0034236">
    <property type="term" value="F:protein kinase A catalytic subunit binding"/>
    <property type="evidence" value="ECO:0000250"/>
    <property type="project" value="UniProtKB"/>
</dbReference>
<dbReference type="GO" id="GO:0034237">
    <property type="term" value="F:protein kinase A regulatory subunit binding"/>
    <property type="evidence" value="ECO:0000250"/>
    <property type="project" value="UniProtKB"/>
</dbReference>
<dbReference type="GO" id="GO:0061630">
    <property type="term" value="F:ubiquitin protein ligase activity"/>
    <property type="evidence" value="ECO:0000266"/>
    <property type="project" value="RGD"/>
</dbReference>
<dbReference type="GO" id="GO:0004842">
    <property type="term" value="F:ubiquitin-protein transferase activity"/>
    <property type="evidence" value="ECO:0000266"/>
    <property type="project" value="RGD"/>
</dbReference>
<dbReference type="GO" id="GO:0008270">
    <property type="term" value="F:zinc ion binding"/>
    <property type="evidence" value="ECO:0007669"/>
    <property type="project" value="UniProtKB-KW"/>
</dbReference>
<dbReference type="GO" id="GO:0006954">
    <property type="term" value="P:inflammatory response"/>
    <property type="evidence" value="ECO:0000250"/>
    <property type="project" value="UniProtKB"/>
</dbReference>
<dbReference type="GO" id="GO:0045087">
    <property type="term" value="P:innate immune response"/>
    <property type="evidence" value="ECO:0000250"/>
    <property type="project" value="UniProtKB"/>
</dbReference>
<dbReference type="GO" id="GO:0007616">
    <property type="term" value="P:long-term memory"/>
    <property type="evidence" value="ECO:0000315"/>
    <property type="project" value="UniProtKB"/>
</dbReference>
<dbReference type="GO" id="GO:0046330">
    <property type="term" value="P:positive regulation of JNK cascade"/>
    <property type="evidence" value="ECO:0000250"/>
    <property type="project" value="UniProtKB"/>
</dbReference>
<dbReference type="GO" id="GO:1900745">
    <property type="term" value="P:positive regulation of p38MAPK cascade"/>
    <property type="evidence" value="ECO:0000250"/>
    <property type="project" value="UniProtKB"/>
</dbReference>
<dbReference type="GO" id="GO:0034137">
    <property type="term" value="P:positive regulation of toll-like receptor 2 signaling pathway"/>
    <property type="evidence" value="ECO:0000250"/>
    <property type="project" value="UniProtKB"/>
</dbReference>
<dbReference type="GO" id="GO:0043161">
    <property type="term" value="P:proteasome-mediated ubiquitin-dependent protein catabolic process"/>
    <property type="evidence" value="ECO:0000266"/>
    <property type="project" value="RGD"/>
</dbReference>
<dbReference type="GO" id="GO:0016567">
    <property type="term" value="P:protein ubiquitination"/>
    <property type="evidence" value="ECO:0000250"/>
    <property type="project" value="UniProtKB"/>
</dbReference>
<dbReference type="GO" id="GO:0043030">
    <property type="term" value="P:regulation of macrophage activation"/>
    <property type="evidence" value="ECO:0000266"/>
    <property type="project" value="RGD"/>
</dbReference>
<dbReference type="GO" id="GO:0010738">
    <property type="term" value="P:regulation of protein kinase A signaling"/>
    <property type="evidence" value="ECO:0000315"/>
    <property type="project" value="UniProtKB"/>
</dbReference>
<dbReference type="CDD" id="cd16465">
    <property type="entry name" value="RING-H2_PJA1_2"/>
    <property type="match status" value="1"/>
</dbReference>
<dbReference type="FunFam" id="3.30.40.10:FF:000152">
    <property type="entry name" value="E3 ubiquitin-protein ligase Praja-1 isoform X1"/>
    <property type="match status" value="1"/>
</dbReference>
<dbReference type="Gene3D" id="3.30.40.10">
    <property type="entry name" value="Zinc/RING finger domain, C3HC4 (zinc finger)"/>
    <property type="match status" value="1"/>
</dbReference>
<dbReference type="InterPro" id="IPR001841">
    <property type="entry name" value="Znf_RING"/>
</dbReference>
<dbReference type="InterPro" id="IPR013083">
    <property type="entry name" value="Znf_RING/FYVE/PHD"/>
</dbReference>
<dbReference type="PANTHER" id="PTHR46151">
    <property type="entry name" value="NEP1-INTERACTING PROTEIN-LIKE 2"/>
    <property type="match status" value="1"/>
</dbReference>
<dbReference type="PANTHER" id="PTHR46151:SF18">
    <property type="entry name" value="NEP1-INTERACTING PROTEIN-LIKE 2"/>
    <property type="match status" value="1"/>
</dbReference>
<dbReference type="Pfam" id="PF13639">
    <property type="entry name" value="zf-RING_2"/>
    <property type="match status" value="1"/>
</dbReference>
<dbReference type="SMART" id="SM00184">
    <property type="entry name" value="RING"/>
    <property type="match status" value="1"/>
</dbReference>
<dbReference type="SUPFAM" id="SSF57850">
    <property type="entry name" value="RING/U-box"/>
    <property type="match status" value="1"/>
</dbReference>
<dbReference type="PROSITE" id="PS50089">
    <property type="entry name" value="ZF_RING_2"/>
    <property type="match status" value="1"/>
</dbReference>